<gene>
    <name evidence="1" type="primary">guaA</name>
    <name type="ordered locus">VCM66_0726</name>
</gene>
<feature type="chain" id="PRO_1000133390" description="GMP synthase [glutamine-hydrolyzing]">
    <location>
        <begin position="1"/>
        <end position="517"/>
    </location>
</feature>
<feature type="domain" description="Glutamine amidotransferase type-1" evidence="1">
    <location>
        <begin position="9"/>
        <end position="199"/>
    </location>
</feature>
<feature type="domain" description="GMPS ATP-PPase" evidence="1">
    <location>
        <begin position="200"/>
        <end position="392"/>
    </location>
</feature>
<feature type="active site" description="Nucleophile" evidence="1">
    <location>
        <position position="86"/>
    </location>
</feature>
<feature type="active site" evidence="1">
    <location>
        <position position="173"/>
    </location>
</feature>
<feature type="active site" evidence="1">
    <location>
        <position position="175"/>
    </location>
</feature>
<feature type="binding site" evidence="1">
    <location>
        <begin position="227"/>
        <end position="233"/>
    </location>
    <ligand>
        <name>ATP</name>
        <dbReference type="ChEBI" id="CHEBI:30616"/>
    </ligand>
</feature>
<proteinExistence type="inferred from homology"/>
<comment type="function">
    <text evidence="1">Catalyzes the synthesis of GMP from XMP.</text>
</comment>
<comment type="catalytic activity">
    <reaction evidence="1">
        <text>XMP + L-glutamine + ATP + H2O = GMP + L-glutamate + AMP + diphosphate + 2 H(+)</text>
        <dbReference type="Rhea" id="RHEA:11680"/>
        <dbReference type="ChEBI" id="CHEBI:15377"/>
        <dbReference type="ChEBI" id="CHEBI:15378"/>
        <dbReference type="ChEBI" id="CHEBI:29985"/>
        <dbReference type="ChEBI" id="CHEBI:30616"/>
        <dbReference type="ChEBI" id="CHEBI:33019"/>
        <dbReference type="ChEBI" id="CHEBI:57464"/>
        <dbReference type="ChEBI" id="CHEBI:58115"/>
        <dbReference type="ChEBI" id="CHEBI:58359"/>
        <dbReference type="ChEBI" id="CHEBI:456215"/>
        <dbReference type="EC" id="6.3.5.2"/>
    </reaction>
</comment>
<comment type="pathway">
    <text evidence="1">Purine metabolism; GMP biosynthesis; GMP from XMP (L-Gln route): step 1/1.</text>
</comment>
<comment type="subunit">
    <text evidence="1">Homodimer.</text>
</comment>
<sequence>MTKNIHDQRILILDFGSQYTQLVARRVREIGVYCELWSWDVEEADIREFNPDGIILSGGPESVTEANSPRAPQYVFDSGVPVFGVCYGMQTMAEQLGGRVATSDEREFGYAQVKISGESALFKDLDLTQDVWMSHGDKVVEIPADFVKIGETDTCPYAAMANEEKKYYGVQFHPEVTHTKNGLQMLENFVLGVCGCERLWTSESIIEDAVARIKEQVGNDEVILGLSGGVDSSVVAMLVHRAIGSKLTCVFVDNGLLRLNEGEQVMEMFGDKFGLNIIKVDAEERFLKALEGIDEPEAKRKTIGRVFVEVFDEESKKLSNAKWLAQGTIYPDVIESAASKTGKAHVIKSHHNVGGLPDDMKMGLVEPLRELFKDEVRKIGLELGLPYNMLYRHPFPGPGLGVRVLGEVKKEYCDLLRRADAIFIEELHAADLYNKVSQAFTVFLPVRSVGVMGDGRKYDWVVSLRAVETIDFMTAHWAHLPYEFLGKVSNRIINEVNGISRVVYDISGKPPATIEWE</sequence>
<dbReference type="EC" id="6.3.5.2" evidence="1"/>
<dbReference type="EMBL" id="CP001233">
    <property type="protein sequence ID" value="ACP05047.1"/>
    <property type="molecule type" value="Genomic_DNA"/>
</dbReference>
<dbReference type="RefSeq" id="WP_000164597.1">
    <property type="nucleotide sequence ID" value="NC_012578.1"/>
</dbReference>
<dbReference type="SMR" id="C3LT21"/>
<dbReference type="MEROPS" id="C26.957"/>
<dbReference type="KEGG" id="vcm:VCM66_0726"/>
<dbReference type="HOGENOM" id="CLU_014340_0_5_6"/>
<dbReference type="UniPathway" id="UPA00189">
    <property type="reaction ID" value="UER00296"/>
</dbReference>
<dbReference type="Proteomes" id="UP000001217">
    <property type="component" value="Chromosome I"/>
</dbReference>
<dbReference type="GO" id="GO:0005829">
    <property type="term" value="C:cytosol"/>
    <property type="evidence" value="ECO:0007669"/>
    <property type="project" value="TreeGrafter"/>
</dbReference>
<dbReference type="GO" id="GO:0005524">
    <property type="term" value="F:ATP binding"/>
    <property type="evidence" value="ECO:0007669"/>
    <property type="project" value="UniProtKB-UniRule"/>
</dbReference>
<dbReference type="GO" id="GO:0003921">
    <property type="term" value="F:GMP synthase activity"/>
    <property type="evidence" value="ECO:0007669"/>
    <property type="project" value="InterPro"/>
</dbReference>
<dbReference type="CDD" id="cd01742">
    <property type="entry name" value="GATase1_GMP_Synthase"/>
    <property type="match status" value="1"/>
</dbReference>
<dbReference type="CDD" id="cd01997">
    <property type="entry name" value="GMP_synthase_C"/>
    <property type="match status" value="1"/>
</dbReference>
<dbReference type="FunFam" id="3.30.300.10:FF:000002">
    <property type="entry name" value="GMP synthase [glutamine-hydrolyzing]"/>
    <property type="match status" value="1"/>
</dbReference>
<dbReference type="FunFam" id="3.40.50.620:FF:000001">
    <property type="entry name" value="GMP synthase [glutamine-hydrolyzing]"/>
    <property type="match status" value="1"/>
</dbReference>
<dbReference type="FunFam" id="3.40.50.880:FF:000001">
    <property type="entry name" value="GMP synthase [glutamine-hydrolyzing]"/>
    <property type="match status" value="1"/>
</dbReference>
<dbReference type="Gene3D" id="3.30.300.10">
    <property type="match status" value="1"/>
</dbReference>
<dbReference type="Gene3D" id="3.40.50.880">
    <property type="match status" value="1"/>
</dbReference>
<dbReference type="Gene3D" id="3.40.50.620">
    <property type="entry name" value="HUPs"/>
    <property type="match status" value="1"/>
</dbReference>
<dbReference type="HAMAP" id="MF_00344">
    <property type="entry name" value="GMP_synthase"/>
    <property type="match status" value="1"/>
</dbReference>
<dbReference type="InterPro" id="IPR029062">
    <property type="entry name" value="Class_I_gatase-like"/>
</dbReference>
<dbReference type="InterPro" id="IPR017926">
    <property type="entry name" value="GATASE"/>
</dbReference>
<dbReference type="InterPro" id="IPR001674">
    <property type="entry name" value="GMP_synth_C"/>
</dbReference>
<dbReference type="InterPro" id="IPR004739">
    <property type="entry name" value="GMP_synth_GATase"/>
</dbReference>
<dbReference type="InterPro" id="IPR022955">
    <property type="entry name" value="GMP_synthase"/>
</dbReference>
<dbReference type="InterPro" id="IPR025777">
    <property type="entry name" value="GMPS_ATP_PPase_dom"/>
</dbReference>
<dbReference type="InterPro" id="IPR022310">
    <property type="entry name" value="NAD/GMP_synthase"/>
</dbReference>
<dbReference type="InterPro" id="IPR014729">
    <property type="entry name" value="Rossmann-like_a/b/a_fold"/>
</dbReference>
<dbReference type="NCBIfam" id="TIGR00884">
    <property type="entry name" value="guaA_Cterm"/>
    <property type="match status" value="1"/>
</dbReference>
<dbReference type="NCBIfam" id="TIGR00888">
    <property type="entry name" value="guaA_Nterm"/>
    <property type="match status" value="1"/>
</dbReference>
<dbReference type="NCBIfam" id="NF000848">
    <property type="entry name" value="PRK00074.1"/>
    <property type="match status" value="1"/>
</dbReference>
<dbReference type="PANTHER" id="PTHR11922:SF2">
    <property type="entry name" value="GMP SYNTHASE [GLUTAMINE-HYDROLYZING]"/>
    <property type="match status" value="1"/>
</dbReference>
<dbReference type="PANTHER" id="PTHR11922">
    <property type="entry name" value="GMP SYNTHASE-RELATED"/>
    <property type="match status" value="1"/>
</dbReference>
<dbReference type="Pfam" id="PF00117">
    <property type="entry name" value="GATase"/>
    <property type="match status" value="1"/>
</dbReference>
<dbReference type="Pfam" id="PF00958">
    <property type="entry name" value="GMP_synt_C"/>
    <property type="match status" value="1"/>
</dbReference>
<dbReference type="Pfam" id="PF02540">
    <property type="entry name" value="NAD_synthase"/>
    <property type="match status" value="1"/>
</dbReference>
<dbReference type="PRINTS" id="PR00097">
    <property type="entry name" value="ANTSNTHASEII"/>
</dbReference>
<dbReference type="PRINTS" id="PR00099">
    <property type="entry name" value="CPSGATASE"/>
</dbReference>
<dbReference type="PRINTS" id="PR00096">
    <property type="entry name" value="GATASE"/>
</dbReference>
<dbReference type="SUPFAM" id="SSF52402">
    <property type="entry name" value="Adenine nucleotide alpha hydrolases-like"/>
    <property type="match status" value="1"/>
</dbReference>
<dbReference type="SUPFAM" id="SSF52317">
    <property type="entry name" value="Class I glutamine amidotransferase-like"/>
    <property type="match status" value="1"/>
</dbReference>
<dbReference type="SUPFAM" id="SSF54810">
    <property type="entry name" value="GMP synthetase C-terminal dimerisation domain"/>
    <property type="match status" value="1"/>
</dbReference>
<dbReference type="PROSITE" id="PS51273">
    <property type="entry name" value="GATASE_TYPE_1"/>
    <property type="match status" value="1"/>
</dbReference>
<dbReference type="PROSITE" id="PS51553">
    <property type="entry name" value="GMPS_ATP_PPASE"/>
    <property type="match status" value="1"/>
</dbReference>
<evidence type="ECO:0000255" key="1">
    <source>
        <dbReference type="HAMAP-Rule" id="MF_00344"/>
    </source>
</evidence>
<keyword id="KW-0067">ATP-binding</keyword>
<keyword id="KW-0315">Glutamine amidotransferase</keyword>
<keyword id="KW-0332">GMP biosynthesis</keyword>
<keyword id="KW-0436">Ligase</keyword>
<keyword id="KW-0547">Nucleotide-binding</keyword>
<keyword id="KW-0658">Purine biosynthesis</keyword>
<protein>
    <recommendedName>
        <fullName evidence="1">GMP synthase [glutamine-hydrolyzing]</fullName>
        <ecNumber evidence="1">6.3.5.2</ecNumber>
    </recommendedName>
    <alternativeName>
        <fullName evidence="1">GMP synthetase</fullName>
    </alternativeName>
    <alternativeName>
        <fullName evidence="1">Glutamine amidotransferase</fullName>
    </alternativeName>
</protein>
<organism>
    <name type="scientific">Vibrio cholerae serotype O1 (strain M66-2)</name>
    <dbReference type="NCBI Taxonomy" id="579112"/>
    <lineage>
        <taxon>Bacteria</taxon>
        <taxon>Pseudomonadati</taxon>
        <taxon>Pseudomonadota</taxon>
        <taxon>Gammaproteobacteria</taxon>
        <taxon>Vibrionales</taxon>
        <taxon>Vibrionaceae</taxon>
        <taxon>Vibrio</taxon>
    </lineage>
</organism>
<accession>C3LT21</accession>
<reference key="1">
    <citation type="journal article" date="2008" name="PLoS ONE">
        <title>A recalibrated molecular clock and independent origins for the cholera pandemic clones.</title>
        <authorList>
            <person name="Feng L."/>
            <person name="Reeves P.R."/>
            <person name="Lan R."/>
            <person name="Ren Y."/>
            <person name="Gao C."/>
            <person name="Zhou Z."/>
            <person name="Ren Y."/>
            <person name="Cheng J."/>
            <person name="Wang W."/>
            <person name="Wang J."/>
            <person name="Qian W."/>
            <person name="Li D."/>
            <person name="Wang L."/>
        </authorList>
    </citation>
    <scope>NUCLEOTIDE SEQUENCE [LARGE SCALE GENOMIC DNA]</scope>
    <source>
        <strain>M66-2</strain>
    </source>
</reference>
<name>GUAA_VIBCM</name>